<keyword id="KW-0963">Cytoplasm</keyword>
<keyword id="KW-0489">Methyltransferase</keyword>
<keyword id="KW-0949">S-adenosyl-L-methionine</keyword>
<keyword id="KW-0808">Transferase</keyword>
<gene>
    <name evidence="1" type="primary">pcm</name>
    <name type="ordered locus">ASA_3469</name>
</gene>
<organism>
    <name type="scientific">Aeromonas salmonicida (strain A449)</name>
    <dbReference type="NCBI Taxonomy" id="382245"/>
    <lineage>
        <taxon>Bacteria</taxon>
        <taxon>Pseudomonadati</taxon>
        <taxon>Pseudomonadota</taxon>
        <taxon>Gammaproteobacteria</taxon>
        <taxon>Aeromonadales</taxon>
        <taxon>Aeromonadaceae</taxon>
        <taxon>Aeromonas</taxon>
    </lineage>
</organism>
<proteinExistence type="inferred from homology"/>
<dbReference type="EC" id="2.1.1.77" evidence="1"/>
<dbReference type="EMBL" id="CP000644">
    <property type="protein sequence ID" value="ABO91437.1"/>
    <property type="molecule type" value="Genomic_DNA"/>
</dbReference>
<dbReference type="RefSeq" id="WP_005318888.1">
    <property type="nucleotide sequence ID" value="NC_009348.1"/>
</dbReference>
<dbReference type="SMR" id="A4SRB5"/>
<dbReference type="STRING" id="29491.GCA_000820065_01053"/>
<dbReference type="KEGG" id="asa:ASA_3469"/>
<dbReference type="eggNOG" id="COG2518">
    <property type="taxonomic scope" value="Bacteria"/>
</dbReference>
<dbReference type="HOGENOM" id="CLU_055432_2_0_6"/>
<dbReference type="Proteomes" id="UP000000225">
    <property type="component" value="Chromosome"/>
</dbReference>
<dbReference type="GO" id="GO:0005737">
    <property type="term" value="C:cytoplasm"/>
    <property type="evidence" value="ECO:0007669"/>
    <property type="project" value="UniProtKB-SubCell"/>
</dbReference>
<dbReference type="GO" id="GO:0004719">
    <property type="term" value="F:protein-L-isoaspartate (D-aspartate) O-methyltransferase activity"/>
    <property type="evidence" value="ECO:0007669"/>
    <property type="project" value="UniProtKB-UniRule"/>
</dbReference>
<dbReference type="GO" id="GO:0032259">
    <property type="term" value="P:methylation"/>
    <property type="evidence" value="ECO:0007669"/>
    <property type="project" value="UniProtKB-KW"/>
</dbReference>
<dbReference type="GO" id="GO:0036211">
    <property type="term" value="P:protein modification process"/>
    <property type="evidence" value="ECO:0007669"/>
    <property type="project" value="UniProtKB-UniRule"/>
</dbReference>
<dbReference type="GO" id="GO:0030091">
    <property type="term" value="P:protein repair"/>
    <property type="evidence" value="ECO:0007669"/>
    <property type="project" value="UniProtKB-UniRule"/>
</dbReference>
<dbReference type="CDD" id="cd02440">
    <property type="entry name" value="AdoMet_MTases"/>
    <property type="match status" value="1"/>
</dbReference>
<dbReference type="FunFam" id="3.40.50.150:FF:000010">
    <property type="entry name" value="Protein-L-isoaspartate O-methyltransferase"/>
    <property type="match status" value="1"/>
</dbReference>
<dbReference type="Gene3D" id="3.40.50.150">
    <property type="entry name" value="Vaccinia Virus protein VP39"/>
    <property type="match status" value="1"/>
</dbReference>
<dbReference type="HAMAP" id="MF_00090">
    <property type="entry name" value="PIMT"/>
    <property type="match status" value="1"/>
</dbReference>
<dbReference type="InterPro" id="IPR000682">
    <property type="entry name" value="PCMT"/>
</dbReference>
<dbReference type="InterPro" id="IPR029063">
    <property type="entry name" value="SAM-dependent_MTases_sf"/>
</dbReference>
<dbReference type="NCBIfam" id="TIGR00080">
    <property type="entry name" value="pimt"/>
    <property type="match status" value="1"/>
</dbReference>
<dbReference type="NCBIfam" id="NF001453">
    <property type="entry name" value="PRK00312.1"/>
    <property type="match status" value="1"/>
</dbReference>
<dbReference type="PANTHER" id="PTHR11579">
    <property type="entry name" value="PROTEIN-L-ISOASPARTATE O-METHYLTRANSFERASE"/>
    <property type="match status" value="1"/>
</dbReference>
<dbReference type="PANTHER" id="PTHR11579:SF0">
    <property type="entry name" value="PROTEIN-L-ISOASPARTATE(D-ASPARTATE) O-METHYLTRANSFERASE"/>
    <property type="match status" value="1"/>
</dbReference>
<dbReference type="Pfam" id="PF01135">
    <property type="entry name" value="PCMT"/>
    <property type="match status" value="1"/>
</dbReference>
<dbReference type="SUPFAM" id="SSF53335">
    <property type="entry name" value="S-adenosyl-L-methionine-dependent methyltransferases"/>
    <property type="match status" value="1"/>
</dbReference>
<dbReference type="PROSITE" id="PS01279">
    <property type="entry name" value="PCMT"/>
    <property type="match status" value="1"/>
</dbReference>
<sequence>MIVQRLLNQLIAQDIRDFRVLAAIAKVPRQLFVDEAMAHKAWDNTALPIGNGQTISQPYMVARMTELLIQNDPAHVLEIGTGSGYQTAVLAHLVEHVYTVERIKSLQFQARRRLRQLDLHNVSAKHGNGWLGWPNKGPFDAILVTAAASEVPTALTDQLADGGRLVLPVGDSHQTLQLIERAGSQLTSRILEPVRFVPLIDGDVE</sequence>
<evidence type="ECO:0000255" key="1">
    <source>
        <dbReference type="HAMAP-Rule" id="MF_00090"/>
    </source>
</evidence>
<comment type="function">
    <text evidence="1">Catalyzes the methyl esterification of L-isoaspartyl residues in peptides and proteins that result from spontaneous decomposition of normal L-aspartyl and L-asparaginyl residues. It plays a role in the repair and/or degradation of damaged proteins.</text>
</comment>
<comment type="catalytic activity">
    <reaction evidence="1">
        <text>[protein]-L-isoaspartate + S-adenosyl-L-methionine = [protein]-L-isoaspartate alpha-methyl ester + S-adenosyl-L-homocysteine</text>
        <dbReference type="Rhea" id="RHEA:12705"/>
        <dbReference type="Rhea" id="RHEA-COMP:12143"/>
        <dbReference type="Rhea" id="RHEA-COMP:12144"/>
        <dbReference type="ChEBI" id="CHEBI:57856"/>
        <dbReference type="ChEBI" id="CHEBI:59789"/>
        <dbReference type="ChEBI" id="CHEBI:90596"/>
        <dbReference type="ChEBI" id="CHEBI:90598"/>
        <dbReference type="EC" id="2.1.1.77"/>
    </reaction>
</comment>
<comment type="subcellular location">
    <subcellularLocation>
        <location evidence="1">Cytoplasm</location>
    </subcellularLocation>
</comment>
<comment type="similarity">
    <text evidence="1">Belongs to the methyltransferase superfamily. L-isoaspartyl/D-aspartyl protein methyltransferase family.</text>
</comment>
<name>PIMT_AERS4</name>
<reference key="1">
    <citation type="journal article" date="2008" name="BMC Genomics">
        <title>The genome of Aeromonas salmonicida subsp. salmonicida A449: insights into the evolution of a fish pathogen.</title>
        <authorList>
            <person name="Reith M.E."/>
            <person name="Singh R.K."/>
            <person name="Curtis B."/>
            <person name="Boyd J.M."/>
            <person name="Bouevitch A."/>
            <person name="Kimball J."/>
            <person name="Munholland J."/>
            <person name="Murphy C."/>
            <person name="Sarty D."/>
            <person name="Williams J."/>
            <person name="Nash J.H."/>
            <person name="Johnson S.C."/>
            <person name="Brown L.L."/>
        </authorList>
    </citation>
    <scope>NUCLEOTIDE SEQUENCE [LARGE SCALE GENOMIC DNA]</scope>
    <source>
        <strain>A449</strain>
    </source>
</reference>
<accession>A4SRB5</accession>
<protein>
    <recommendedName>
        <fullName evidence="1">Protein-L-isoaspartate O-methyltransferase</fullName>
        <ecNumber evidence="1">2.1.1.77</ecNumber>
    </recommendedName>
    <alternativeName>
        <fullName evidence="1">L-isoaspartyl protein carboxyl methyltransferase</fullName>
    </alternativeName>
    <alternativeName>
        <fullName evidence="1">Protein L-isoaspartyl methyltransferase</fullName>
    </alternativeName>
    <alternativeName>
        <fullName evidence="1">Protein-beta-aspartate methyltransferase</fullName>
        <shortName evidence="1">PIMT</shortName>
    </alternativeName>
</protein>
<feature type="chain" id="PRO_0000351809" description="Protein-L-isoaspartate O-methyltransferase">
    <location>
        <begin position="1"/>
        <end position="205"/>
    </location>
</feature>
<feature type="active site" evidence="1">
    <location>
        <position position="56"/>
    </location>
</feature>